<dbReference type="EMBL" id="AF268199">
    <property type="protein sequence ID" value="AAK98518.1"/>
    <property type="molecule type" value="Genomic_DNA"/>
</dbReference>
<dbReference type="EMBL" id="AF268200">
    <property type="protein sequence ID" value="AAK98519.1"/>
    <property type="molecule type" value="mRNA"/>
</dbReference>
<dbReference type="GO" id="GO:0000786">
    <property type="term" value="C:nucleosome"/>
    <property type="evidence" value="ECO:0007669"/>
    <property type="project" value="UniProtKB-KW"/>
</dbReference>
<dbReference type="GO" id="GO:0005634">
    <property type="term" value="C:nucleus"/>
    <property type="evidence" value="ECO:0007669"/>
    <property type="project" value="UniProtKB-SubCell"/>
</dbReference>
<dbReference type="GO" id="GO:0003677">
    <property type="term" value="F:DNA binding"/>
    <property type="evidence" value="ECO:0007669"/>
    <property type="project" value="UniProtKB-KW"/>
</dbReference>
<dbReference type="GO" id="GO:0030261">
    <property type="term" value="P:chromosome condensation"/>
    <property type="evidence" value="ECO:0007669"/>
    <property type="project" value="UniProtKB-KW"/>
</dbReference>
<dbReference type="GO" id="GO:0006997">
    <property type="term" value="P:nucleus organization"/>
    <property type="evidence" value="ECO:0007669"/>
    <property type="project" value="TreeGrafter"/>
</dbReference>
<dbReference type="GO" id="GO:0007286">
    <property type="term" value="P:spermatid development"/>
    <property type="evidence" value="ECO:0007669"/>
    <property type="project" value="InterPro"/>
</dbReference>
<dbReference type="GO" id="GO:0007283">
    <property type="term" value="P:spermatogenesis"/>
    <property type="evidence" value="ECO:0000250"/>
    <property type="project" value="UniProtKB"/>
</dbReference>
<dbReference type="InterPro" id="IPR000492">
    <property type="entry name" value="PRM2"/>
</dbReference>
<dbReference type="PANTHER" id="PTHR21341">
    <property type="entry name" value="PROTAMINE-2"/>
    <property type="match status" value="1"/>
</dbReference>
<dbReference type="PANTHER" id="PTHR21341:SF2">
    <property type="entry name" value="PROTAMINE-2"/>
    <property type="match status" value="1"/>
</dbReference>
<dbReference type="Pfam" id="PF00841">
    <property type="entry name" value="Protamine_P2"/>
    <property type="match status" value="1"/>
</dbReference>
<reference key="1">
    <citation type="submission" date="2000-05" db="EMBL/GenBank/DDBJ databases">
        <title>Variable regulation of protamine 2 gene expression in muroid rodents.</title>
        <authorList>
            <person name="Dolan C.E."/>
            <person name="Fabes S.E."/>
            <person name="Mazrimas J.A."/>
            <person name="Corzett M.H."/>
            <person name="Breed W.G."/>
            <person name="Balhorn R."/>
        </authorList>
    </citation>
    <scope>NUCLEOTIDE SEQUENCE [GENOMIC DNA / MRNA]</scope>
</reference>
<evidence type="ECO:0000250" key="1">
    <source>
        <dbReference type="UniProtKB" id="P07978"/>
    </source>
</evidence>
<evidence type="ECO:0000250" key="2">
    <source>
        <dbReference type="UniProtKB" id="P11248"/>
    </source>
</evidence>
<evidence type="ECO:0000256" key="3">
    <source>
        <dbReference type="SAM" id="MobiDB-lite"/>
    </source>
</evidence>
<evidence type="ECO:0000305" key="4"/>
<accession>Q91VB3</accession>
<comment type="function">
    <text evidence="1">Protamines substitute for histones in the chromatin of sperm during the haploid phase of spermatogenesis. They compact sperm DNA into a highly condensed, stable and inactive complex.</text>
</comment>
<comment type="subunit">
    <text evidence="1">Interacts with TDRP.</text>
</comment>
<comment type="subcellular location">
    <subcellularLocation>
        <location evidence="1">Nucleus</location>
    </subcellularLocation>
    <subcellularLocation>
        <location evidence="1">Chromosome</location>
    </subcellularLocation>
</comment>
<comment type="tissue specificity">
    <text>Testis.</text>
</comment>
<comment type="PTM">
    <text evidence="1">Proteolytic processing into mature chains is required for histone eviction during spermatogenesis. Transition proteins (TNP1 and TNP2) are required for processing.</text>
</comment>
<comment type="similarity">
    <text evidence="4">Belongs to the protamine P2 family.</text>
</comment>
<organism>
    <name type="scientific">Rattus tunneyi</name>
    <name type="common">Tunney's rat</name>
    <name type="synonym">Pale field rat</name>
    <dbReference type="NCBI Taxonomy" id="10121"/>
    <lineage>
        <taxon>Eukaryota</taxon>
        <taxon>Metazoa</taxon>
        <taxon>Chordata</taxon>
        <taxon>Craniata</taxon>
        <taxon>Vertebrata</taxon>
        <taxon>Euteleostomi</taxon>
        <taxon>Mammalia</taxon>
        <taxon>Eutheria</taxon>
        <taxon>Euarchontoglires</taxon>
        <taxon>Glires</taxon>
        <taxon>Rodentia</taxon>
        <taxon>Myomorpha</taxon>
        <taxon>Muroidea</taxon>
        <taxon>Muridae</taxon>
        <taxon>Murinae</taxon>
        <taxon>Rattus</taxon>
    </lineage>
</organism>
<gene>
    <name type="primary">Prm2</name>
</gene>
<feature type="chain" id="PRO_0000254959" description="Protamine-2">
    <location>
        <begin position="1"/>
        <end position="105"/>
    </location>
</feature>
<feature type="region of interest" description="Disordered" evidence="3">
    <location>
        <begin position="1"/>
        <end position="74"/>
    </location>
</feature>
<feature type="compositionally biased region" description="Basic and acidic residues" evidence="3">
    <location>
        <begin position="33"/>
        <end position="42"/>
    </location>
</feature>
<feature type="compositionally biased region" description="Basic residues" evidence="3">
    <location>
        <begin position="43"/>
        <end position="74"/>
    </location>
</feature>
<feature type="modified residue" description="Phosphoserine" evidence="2">
    <location>
        <position position="8"/>
    </location>
</feature>
<feature type="modified residue" description="Phosphoserine" evidence="2">
    <location>
        <position position="10"/>
    </location>
</feature>
<sequence>MVRYRMRSPSESPHQGPGQDHESEEQGQGQELNPERVEDYGRTHRGHHRHRRCSRKRLHRIHKRRRSCRRRRRHSCCHRRRHRRGCRRSRRRRRCRCRKCRRQCH</sequence>
<protein>
    <recommendedName>
        <fullName>Protamine-2</fullName>
    </recommendedName>
    <alternativeName>
        <fullName>Sperm histone P2</fullName>
    </alternativeName>
    <alternativeName>
        <fullName>Sperm protamine P2</fullName>
    </alternativeName>
</protein>
<proteinExistence type="evidence at transcript level"/>
<keyword id="KW-0158">Chromosome</keyword>
<keyword id="KW-0217">Developmental protein</keyword>
<keyword id="KW-0221">Differentiation</keyword>
<keyword id="KW-0226">DNA condensation</keyword>
<keyword id="KW-0238">DNA-binding</keyword>
<keyword id="KW-0544">Nucleosome core</keyword>
<keyword id="KW-0539">Nucleus</keyword>
<keyword id="KW-0597">Phosphoprotein</keyword>
<keyword id="KW-0744">Spermatogenesis</keyword>
<name>PRM2_RATTU</name>